<gene>
    <name type="ordered locus">BQ2027_MB0984</name>
</gene>
<feature type="chain" id="PRO_0000103754" description="Uncharacterized protein Mb0984">
    <location>
        <begin position="1"/>
        <end position="672"/>
    </location>
</feature>
<feature type="region of interest" description="Disordered" evidence="1">
    <location>
        <begin position="1"/>
        <end position="41"/>
    </location>
</feature>
<feature type="compositionally biased region" description="Basic and acidic residues" evidence="1">
    <location>
        <begin position="1"/>
        <end position="10"/>
    </location>
</feature>
<accession>P0A5D8</accession>
<accession>A0A1R3XZ16</accession>
<accession>P71551</accession>
<accession>X2BGJ9</accession>
<keyword id="KW-1185">Reference proteome</keyword>
<protein>
    <recommendedName>
        <fullName>Uncharacterized protein Mb0984</fullName>
    </recommendedName>
</protein>
<organism>
    <name type="scientific">Mycobacterium bovis (strain ATCC BAA-935 / AF2122/97)</name>
    <dbReference type="NCBI Taxonomy" id="233413"/>
    <lineage>
        <taxon>Bacteria</taxon>
        <taxon>Bacillati</taxon>
        <taxon>Actinomycetota</taxon>
        <taxon>Actinomycetes</taxon>
        <taxon>Mycobacteriales</taxon>
        <taxon>Mycobacteriaceae</taxon>
        <taxon>Mycobacterium</taxon>
        <taxon>Mycobacterium tuberculosis complex</taxon>
    </lineage>
</organism>
<proteinExistence type="predicted"/>
<reference key="1">
    <citation type="journal article" date="2003" name="Proc. Natl. Acad. Sci. U.S.A.">
        <title>The complete genome sequence of Mycobacterium bovis.</title>
        <authorList>
            <person name="Garnier T."/>
            <person name="Eiglmeier K."/>
            <person name="Camus J.-C."/>
            <person name="Medina N."/>
            <person name="Mansoor H."/>
            <person name="Pryor M."/>
            <person name="Duthoy S."/>
            <person name="Grondin S."/>
            <person name="Lacroix C."/>
            <person name="Monsempe C."/>
            <person name="Simon S."/>
            <person name="Harris B."/>
            <person name="Atkin R."/>
            <person name="Doggett J."/>
            <person name="Mayes R."/>
            <person name="Keating L."/>
            <person name="Wheeler P.R."/>
            <person name="Parkhill J."/>
            <person name="Barrell B.G."/>
            <person name="Cole S.T."/>
            <person name="Gordon S.V."/>
            <person name="Hewinson R.G."/>
        </authorList>
    </citation>
    <scope>NUCLEOTIDE SEQUENCE [LARGE SCALE GENOMIC DNA]</scope>
    <source>
        <strain>ATCC BAA-935 / AF2122/97</strain>
    </source>
</reference>
<reference key="2">
    <citation type="journal article" date="2017" name="Genome Announc.">
        <title>Updated reference genome sequence and annotation of Mycobacterium bovis AF2122/97.</title>
        <authorList>
            <person name="Malone K.M."/>
            <person name="Farrell D."/>
            <person name="Stuber T.P."/>
            <person name="Schubert O.T."/>
            <person name="Aebersold R."/>
            <person name="Robbe-Austerman S."/>
            <person name="Gordon S.V."/>
        </authorList>
    </citation>
    <scope>NUCLEOTIDE SEQUENCE [LARGE SCALE GENOMIC DNA]</scope>
    <scope>GENOME REANNOTATION</scope>
    <source>
        <strain>ATCC BAA-935 / AF2122/97</strain>
    </source>
</reference>
<sequence length="672" mass="74636">MAKSDGDDPLRPASPRLRSSRRHSLRYSAYTGGPDPLAPPVDLRDALEQIGQDVMAGASPRRALSELLRRGTRNLTGADRLAAEVNRRRRELLRRNNLDGTLQEIKKLLDEAVLAERKELARALDDDARFAELQLDALPASPAKAVQELAEYRWRSGQAREKYEQIKDLLGRELLDQRFAGMKQALAGATDDDRRRVTEMLDDLNDLLDKHARGEDTQRDFDEFMTKHGEFFPENPRNVEELLDSLAKRAAAAQRFRNSLSQEQRDELDALAQQAFGSPALMRALDRLDAHLQAARPGEDWTGSQQFSGDNPFGMGEGTQALADIAELEQLAEQLSQSYPGASMDDVDLDALARQLGDQAAVDARTLAELERALVNQGFLDRGSDGQWRLSPKAMRRLGETALRDVAQQLSGRHGERDHRRAGAAGELTGATRPWQFGDTEPWHVARTLTNAVLRQAAAVHDRIRITVEDVEVAETETRTQAAVALLVDTSFSMVMENRWLPMKRTALALHHLVCTRFRSDALQIIAFGRYARTVTAAELTGLAGVYEQGTNLHHALALAGRHLRRHAGAQPVVLVVTDGEPTAHLEDFDGDGTSVFFDYPPHPRTIAHTVRGFDDMARLGAQVTIFRLGSDPGLARFIDQVARRVQGRVVVPDLDGLGAAVVGDYLRFRRR</sequence>
<dbReference type="EMBL" id="LT708304">
    <property type="protein sequence ID" value="SIT99582.1"/>
    <property type="molecule type" value="Genomic_DNA"/>
</dbReference>
<dbReference type="RefSeq" id="NP_854641.1">
    <property type="nucleotide sequence ID" value="NC_002945.3"/>
</dbReference>
<dbReference type="RefSeq" id="WP_003404895.1">
    <property type="nucleotide sequence ID" value="NC_002945.4"/>
</dbReference>
<dbReference type="SMR" id="P0A5D8"/>
<dbReference type="KEGG" id="mbo:BQ2027_MB0984"/>
<dbReference type="PATRIC" id="fig|233413.5.peg.1071"/>
<dbReference type="Proteomes" id="UP000001419">
    <property type="component" value="Chromosome"/>
</dbReference>
<dbReference type="CDD" id="cd00198">
    <property type="entry name" value="vWFA"/>
    <property type="match status" value="1"/>
</dbReference>
<dbReference type="FunFam" id="3.40.50.410:FF:000066">
    <property type="entry name" value="von Willebrand factor, type A"/>
    <property type="match status" value="1"/>
</dbReference>
<dbReference type="Gene3D" id="3.40.50.410">
    <property type="entry name" value="von Willebrand factor, type A domain"/>
    <property type="match status" value="1"/>
</dbReference>
<dbReference type="InterPro" id="IPR002035">
    <property type="entry name" value="VWF_A"/>
</dbReference>
<dbReference type="InterPro" id="IPR036465">
    <property type="entry name" value="vWFA_dom_sf"/>
</dbReference>
<dbReference type="SMART" id="SM00327">
    <property type="entry name" value="VWA"/>
    <property type="match status" value="1"/>
</dbReference>
<dbReference type="SUPFAM" id="SSF53300">
    <property type="entry name" value="vWA-like"/>
    <property type="match status" value="1"/>
</dbReference>
<evidence type="ECO:0000256" key="1">
    <source>
        <dbReference type="SAM" id="MobiDB-lite"/>
    </source>
</evidence>
<name>Y984_MYCBO</name>